<comment type="subcellular location">
    <subcellularLocation>
        <location evidence="1">Secreted</location>
    </subcellularLocation>
</comment>
<comment type="tissue specificity">
    <text evidence="3 4">Both forms widely expressed in the nervous system. Expressed in corpora cardiaca, corpora allata, hypocerebral ganglion, frontal ganglion, frontal connectives, recurrent nerve, esophageal nerves, protocerebrum, pars intercerebralis, antennal lobe, tritocerebrum, circumesophageal connectives, subesophageal ganglion, thoracic ganglia and abdominal ganglia (at protein level). Not detected in abdominal perisympathetic organs.</text>
</comment>
<comment type="mass spectrometry">
    <molecule>Short neuropeptide F</molecule>
</comment>
<comment type="mass spectrometry">
    <molecule>Short neuropeptide F4-11</molecule>
</comment>
<comment type="similarity">
    <text evidence="2">Belongs to the NPY family.</text>
</comment>
<dbReference type="GO" id="GO:0005576">
    <property type="term" value="C:extracellular region"/>
    <property type="evidence" value="ECO:0007669"/>
    <property type="project" value="UniProtKB-SubCell"/>
</dbReference>
<dbReference type="GO" id="GO:0007218">
    <property type="term" value="P:neuropeptide signaling pathway"/>
    <property type="evidence" value="ECO:0007669"/>
    <property type="project" value="UniProtKB-KW"/>
</dbReference>
<protein>
    <recommendedName>
        <fullName evidence="5 6">Short neuropeptide F</fullName>
        <shortName evidence="5 6">Scg-sNPF</shortName>
        <shortName evidence="5 6">sNPF</shortName>
    </recommendedName>
    <component>
        <recommendedName>
            <fullName evidence="5">Short neuropeptide F4-11</fullName>
            <shortName evidence="5">Scg-sNPF4-11</shortName>
        </recommendedName>
    </component>
</protein>
<keyword id="KW-0027">Amidation</keyword>
<keyword id="KW-0903">Direct protein sequencing</keyword>
<keyword id="KW-0527">Neuropeptide</keyword>
<keyword id="KW-0964">Secreted</keyword>
<name>SNPF_SCHGR</name>
<proteinExistence type="evidence at protein level"/>
<organism>
    <name type="scientific">Schistocerca gregaria</name>
    <name type="common">Desert locust</name>
    <name type="synonym">Gryllus gregarius</name>
    <dbReference type="NCBI Taxonomy" id="7010"/>
    <lineage>
        <taxon>Eukaryota</taxon>
        <taxon>Metazoa</taxon>
        <taxon>Ecdysozoa</taxon>
        <taxon>Arthropoda</taxon>
        <taxon>Hexapoda</taxon>
        <taxon>Insecta</taxon>
        <taxon>Pterygota</taxon>
        <taxon>Neoptera</taxon>
        <taxon>Polyneoptera</taxon>
        <taxon>Orthoptera</taxon>
        <taxon>Caelifera</taxon>
        <taxon>Acrididea</taxon>
        <taxon>Acridomorpha</taxon>
        <taxon>Acridoidea</taxon>
        <taxon>Acrididae</taxon>
        <taxon>Cyrtacanthacridinae</taxon>
        <taxon>Schistocerca</taxon>
    </lineage>
</organism>
<feature type="peptide" id="PRO_0000392449" description="Short neuropeptide F" evidence="3">
    <location>
        <begin position="1"/>
        <end position="11"/>
    </location>
</feature>
<feature type="peptide" id="PRO_0000392450" description="Short neuropeptide F4-11" evidence="3">
    <location>
        <begin position="4"/>
        <end position="11"/>
    </location>
</feature>
<feature type="modified residue" description="Phenylalanine amide" evidence="3">
    <location>
        <position position="11"/>
    </location>
</feature>
<feature type="unsure residue" description="L or I" evidence="3">
    <location>
        <position position="7"/>
    </location>
</feature>
<feature type="unsure residue" description="L or I" evidence="3">
    <location>
        <position position="9"/>
    </location>
</feature>
<sequence>SNRSPSLRLRF</sequence>
<accession>P86445</accession>
<reference evidence="7" key="1">
    <citation type="journal article" date="2009" name="Ann. N. Y. Acad. Sci.">
        <title>Identification of new members of the (short) neuropeptide F family in locusts and Caenorhabditis elegans.</title>
        <authorList>
            <person name="Clynen E."/>
            <person name="Husson S.J."/>
            <person name="Schoofs L."/>
        </authorList>
    </citation>
    <scope>PROTEIN SEQUENCE</scope>
    <scope>TISSUE SPECIFICITY</scope>
    <scope>MASS SPECTROMETRY</scope>
    <scope>AMIDATION AT PHE-11</scope>
</reference>
<reference evidence="7" key="2">
    <citation type="journal article" date="2009" name="Insect Biochem. Mol. Biol.">
        <title>Peptidomic survey of the locust neuroendocrine system.</title>
        <authorList>
            <person name="Clynen E."/>
            <person name="Schoofs L."/>
        </authorList>
    </citation>
    <scope>IDENTIFICATION BY MASS SPECTROMETRY</scope>
    <scope>TISSUE SPECIFICITY</scope>
</reference>
<evidence type="ECO:0000250" key="1">
    <source>
        <dbReference type="UniProtKB" id="Q9VIQ0"/>
    </source>
</evidence>
<evidence type="ECO:0000255" key="2"/>
<evidence type="ECO:0000269" key="3">
    <source>
    </source>
</evidence>
<evidence type="ECO:0000269" key="4">
    <source>
    </source>
</evidence>
<evidence type="ECO:0000303" key="5">
    <source>
    </source>
</evidence>
<evidence type="ECO:0000303" key="6">
    <source>
    </source>
</evidence>
<evidence type="ECO:0000305" key="7"/>